<evidence type="ECO:0000250" key="1"/>
<evidence type="ECO:0000250" key="2">
    <source>
        <dbReference type="UniProtKB" id="P00157"/>
    </source>
</evidence>
<evidence type="ECO:0000255" key="3">
    <source>
        <dbReference type="PROSITE-ProRule" id="PRU00967"/>
    </source>
</evidence>
<evidence type="ECO:0000255" key="4">
    <source>
        <dbReference type="PROSITE-ProRule" id="PRU00968"/>
    </source>
</evidence>
<protein>
    <recommendedName>
        <fullName>Cytochrome b</fullName>
    </recommendedName>
    <alternativeName>
        <fullName>Complex III subunit 3</fullName>
    </alternativeName>
    <alternativeName>
        <fullName>Complex III subunit III</fullName>
    </alternativeName>
    <alternativeName>
        <fullName>Cytochrome b-c1 complex subunit 3</fullName>
    </alternativeName>
    <alternativeName>
        <fullName>Ubiquinol-cytochrome-c reductase complex cytochrome b subunit</fullName>
    </alternativeName>
</protein>
<geneLocation type="mitochondrion"/>
<accession>O99258</accession>
<dbReference type="EMBL" id="AF016637">
    <property type="protein sequence ID" value="AAD13480.1"/>
    <property type="molecule type" value="Genomic_DNA"/>
</dbReference>
<dbReference type="SMR" id="O99258"/>
<dbReference type="GO" id="GO:0005743">
    <property type="term" value="C:mitochondrial inner membrane"/>
    <property type="evidence" value="ECO:0007669"/>
    <property type="project" value="UniProtKB-SubCell"/>
</dbReference>
<dbReference type="GO" id="GO:0045275">
    <property type="term" value="C:respiratory chain complex III"/>
    <property type="evidence" value="ECO:0007669"/>
    <property type="project" value="InterPro"/>
</dbReference>
<dbReference type="GO" id="GO:0046872">
    <property type="term" value="F:metal ion binding"/>
    <property type="evidence" value="ECO:0007669"/>
    <property type="project" value="UniProtKB-KW"/>
</dbReference>
<dbReference type="GO" id="GO:0008121">
    <property type="term" value="F:ubiquinol-cytochrome-c reductase activity"/>
    <property type="evidence" value="ECO:0007669"/>
    <property type="project" value="InterPro"/>
</dbReference>
<dbReference type="GO" id="GO:0006122">
    <property type="term" value="P:mitochondrial electron transport, ubiquinol to cytochrome c"/>
    <property type="evidence" value="ECO:0007669"/>
    <property type="project" value="TreeGrafter"/>
</dbReference>
<dbReference type="CDD" id="cd00290">
    <property type="entry name" value="cytochrome_b_C"/>
    <property type="match status" value="1"/>
</dbReference>
<dbReference type="CDD" id="cd00284">
    <property type="entry name" value="Cytochrome_b_N"/>
    <property type="match status" value="1"/>
</dbReference>
<dbReference type="FunFam" id="1.20.810.10:FF:000002">
    <property type="entry name" value="Cytochrome b"/>
    <property type="match status" value="1"/>
</dbReference>
<dbReference type="Gene3D" id="1.20.810.10">
    <property type="entry name" value="Cytochrome Bc1 Complex, Chain C"/>
    <property type="match status" value="1"/>
</dbReference>
<dbReference type="InterPro" id="IPR005798">
    <property type="entry name" value="Cyt_b/b6_C"/>
</dbReference>
<dbReference type="InterPro" id="IPR036150">
    <property type="entry name" value="Cyt_b/b6_C_sf"/>
</dbReference>
<dbReference type="InterPro" id="IPR005797">
    <property type="entry name" value="Cyt_b/b6_N"/>
</dbReference>
<dbReference type="InterPro" id="IPR027387">
    <property type="entry name" value="Cytb/b6-like_sf"/>
</dbReference>
<dbReference type="InterPro" id="IPR030689">
    <property type="entry name" value="Cytochrome_b"/>
</dbReference>
<dbReference type="InterPro" id="IPR048260">
    <property type="entry name" value="Cytochrome_b_C_euk/bac"/>
</dbReference>
<dbReference type="InterPro" id="IPR048259">
    <property type="entry name" value="Cytochrome_b_N_euk/bac"/>
</dbReference>
<dbReference type="InterPro" id="IPR016174">
    <property type="entry name" value="Di-haem_cyt_TM"/>
</dbReference>
<dbReference type="PANTHER" id="PTHR19271">
    <property type="entry name" value="CYTOCHROME B"/>
    <property type="match status" value="1"/>
</dbReference>
<dbReference type="PANTHER" id="PTHR19271:SF16">
    <property type="entry name" value="CYTOCHROME B"/>
    <property type="match status" value="1"/>
</dbReference>
<dbReference type="Pfam" id="PF00032">
    <property type="entry name" value="Cytochrom_B_C"/>
    <property type="match status" value="1"/>
</dbReference>
<dbReference type="Pfam" id="PF00033">
    <property type="entry name" value="Cytochrome_B"/>
    <property type="match status" value="1"/>
</dbReference>
<dbReference type="PIRSF" id="PIRSF038885">
    <property type="entry name" value="COB"/>
    <property type="match status" value="1"/>
</dbReference>
<dbReference type="SUPFAM" id="SSF81648">
    <property type="entry name" value="a domain/subunit of cytochrome bc1 complex (Ubiquinol-cytochrome c reductase)"/>
    <property type="match status" value="1"/>
</dbReference>
<dbReference type="SUPFAM" id="SSF81342">
    <property type="entry name" value="Transmembrane di-heme cytochromes"/>
    <property type="match status" value="1"/>
</dbReference>
<dbReference type="PROSITE" id="PS51003">
    <property type="entry name" value="CYTB_CTER"/>
    <property type="match status" value="1"/>
</dbReference>
<dbReference type="PROSITE" id="PS51002">
    <property type="entry name" value="CYTB_NTER"/>
    <property type="match status" value="1"/>
</dbReference>
<keyword id="KW-0249">Electron transport</keyword>
<keyword id="KW-0349">Heme</keyword>
<keyword id="KW-0408">Iron</keyword>
<keyword id="KW-0472">Membrane</keyword>
<keyword id="KW-0479">Metal-binding</keyword>
<keyword id="KW-0496">Mitochondrion</keyword>
<keyword id="KW-0999">Mitochondrion inner membrane</keyword>
<keyword id="KW-0679">Respiratory chain</keyword>
<keyword id="KW-0812">Transmembrane</keyword>
<keyword id="KW-1133">Transmembrane helix</keyword>
<keyword id="KW-0813">Transport</keyword>
<keyword id="KW-0830">Ubiquinone</keyword>
<feature type="chain" id="PRO_0000060804" description="Cytochrome b">
    <location>
        <begin position="1"/>
        <end position="379"/>
    </location>
</feature>
<feature type="transmembrane region" description="Helical" evidence="2">
    <location>
        <begin position="33"/>
        <end position="53"/>
    </location>
</feature>
<feature type="transmembrane region" description="Helical" evidence="2">
    <location>
        <begin position="77"/>
        <end position="98"/>
    </location>
</feature>
<feature type="transmembrane region" description="Helical" evidence="2">
    <location>
        <begin position="113"/>
        <end position="133"/>
    </location>
</feature>
<feature type="transmembrane region" description="Helical" evidence="2">
    <location>
        <begin position="178"/>
        <end position="198"/>
    </location>
</feature>
<feature type="transmembrane region" description="Helical" evidence="2">
    <location>
        <begin position="226"/>
        <end position="246"/>
    </location>
</feature>
<feature type="transmembrane region" description="Helical" evidence="2">
    <location>
        <begin position="288"/>
        <end position="308"/>
    </location>
</feature>
<feature type="transmembrane region" description="Helical" evidence="2">
    <location>
        <begin position="320"/>
        <end position="340"/>
    </location>
</feature>
<feature type="transmembrane region" description="Helical" evidence="2">
    <location>
        <begin position="347"/>
        <end position="367"/>
    </location>
</feature>
<feature type="binding site" description="axial binding residue" evidence="2">
    <location>
        <position position="83"/>
    </location>
    <ligand>
        <name>heme b</name>
        <dbReference type="ChEBI" id="CHEBI:60344"/>
        <label>b562</label>
    </ligand>
    <ligandPart>
        <name>Fe</name>
        <dbReference type="ChEBI" id="CHEBI:18248"/>
    </ligandPart>
</feature>
<feature type="binding site" description="axial binding residue" evidence="2">
    <location>
        <position position="97"/>
    </location>
    <ligand>
        <name>heme b</name>
        <dbReference type="ChEBI" id="CHEBI:60344"/>
        <label>b566</label>
    </ligand>
    <ligandPart>
        <name>Fe</name>
        <dbReference type="ChEBI" id="CHEBI:18248"/>
    </ligandPart>
</feature>
<feature type="binding site" description="axial binding residue" evidence="2">
    <location>
        <position position="182"/>
    </location>
    <ligand>
        <name>heme b</name>
        <dbReference type="ChEBI" id="CHEBI:60344"/>
        <label>b562</label>
    </ligand>
    <ligandPart>
        <name>Fe</name>
        <dbReference type="ChEBI" id="CHEBI:18248"/>
    </ligandPart>
</feature>
<feature type="binding site" description="axial binding residue" evidence="2">
    <location>
        <position position="196"/>
    </location>
    <ligand>
        <name>heme b</name>
        <dbReference type="ChEBI" id="CHEBI:60344"/>
        <label>b566</label>
    </ligand>
    <ligandPart>
        <name>Fe</name>
        <dbReference type="ChEBI" id="CHEBI:18248"/>
    </ligandPart>
</feature>
<feature type="binding site" evidence="2">
    <location>
        <position position="201"/>
    </location>
    <ligand>
        <name>a ubiquinone</name>
        <dbReference type="ChEBI" id="CHEBI:16389"/>
    </ligand>
</feature>
<organism>
    <name type="scientific">Connochaetes gnou</name>
    <name type="common">Black wildebeest</name>
    <dbReference type="NCBI Taxonomy" id="59528"/>
    <lineage>
        <taxon>Eukaryota</taxon>
        <taxon>Metazoa</taxon>
        <taxon>Chordata</taxon>
        <taxon>Craniata</taxon>
        <taxon>Vertebrata</taxon>
        <taxon>Euteleostomi</taxon>
        <taxon>Mammalia</taxon>
        <taxon>Eutheria</taxon>
        <taxon>Laurasiatheria</taxon>
        <taxon>Artiodactyla</taxon>
        <taxon>Ruminantia</taxon>
        <taxon>Pecora</taxon>
        <taxon>Bovidae</taxon>
        <taxon>Alcelaphinae</taxon>
        <taxon>Connochaetes</taxon>
    </lineage>
</organism>
<sequence length="379" mass="42651">MTNIRKTHPLMEIINNAFIDLPAPSNISSWWNFGSLLGICLILQILTGLFLAMHYTSDTTTAFSSVTHICRDVNYGWIIRYMHANGASMFFICLFLHVGRGLYYGSYTFLETWNVGVILLFATMATAFMGYVLPWGQMSFWGATVITNLLSAIPYIGTNLVEWIWGGFSVDKATLTRFFAFHFILPFIITALAMVHLLFLHETGSNNPTGISSDTDKIPFHPYYTIKDILGALLLILALMLLVLFAPDLLGDPDNYTPANPLNTPPHIKPEWYFLFAYAILRSIPNELGGVLALVLSILILVLMPLLHTSKQRSMMFRPISQCMFWILVADLLTLTWIGGQPVEHPYIIIGQLASIMYFLLILVLMPAAGTIENNLLKW</sequence>
<comment type="function">
    <text evidence="2">Component of the ubiquinol-cytochrome c reductase complex (complex III or cytochrome b-c1 complex) that is part of the mitochondrial respiratory chain. The b-c1 complex mediates electron transfer from ubiquinol to cytochrome c. Contributes to the generation of a proton gradient across the mitochondrial membrane that is then used for ATP synthesis.</text>
</comment>
<comment type="cofactor">
    <cofactor evidence="2">
        <name>heme b</name>
        <dbReference type="ChEBI" id="CHEBI:60344"/>
    </cofactor>
    <text evidence="2">Binds 2 heme b groups non-covalently.</text>
</comment>
<comment type="subunit">
    <text evidence="2">The cytochrome bc1 complex contains 11 subunits: 3 respiratory subunits (MT-CYB, CYC1 and UQCRFS1), 2 core proteins (UQCRC1 and UQCRC2) and 6 low-molecular weight proteins (UQCRH/QCR6, UQCRB/QCR7, UQCRQ/QCR8, UQCR10/QCR9, UQCR11/QCR10 and a cleavage product of UQCRFS1). This cytochrome bc1 complex then forms a dimer.</text>
</comment>
<comment type="subcellular location">
    <subcellularLocation>
        <location evidence="2">Mitochondrion inner membrane</location>
        <topology evidence="2">Multi-pass membrane protein</topology>
    </subcellularLocation>
</comment>
<comment type="miscellaneous">
    <text evidence="1">Heme 1 (or BL or b562) is low-potential and absorbs at about 562 nm, and heme 2 (or BH or b566) is high-potential and absorbs at about 566 nm.</text>
</comment>
<comment type="similarity">
    <text evidence="3 4">Belongs to the cytochrome b family.</text>
</comment>
<comment type="caution">
    <text evidence="2">The full-length protein contains only eight transmembrane helices, not nine as predicted by bioinformatics tools.</text>
</comment>
<gene>
    <name type="primary">MT-CYB</name>
    <name type="synonym">COB</name>
    <name type="synonym">CYTB</name>
    <name type="synonym">MTCYB</name>
</gene>
<proteinExistence type="inferred from homology"/>
<reference key="1">
    <citation type="journal article" date="1999" name="Mol. Phylogenet. Evol.">
        <title>Cytochrome b phylogeny of the family bovidae: resolution within the alcelaphini, antilopini, neotragini, and tragelaphini.</title>
        <authorList>
            <person name="Matthee C.A."/>
            <person name="Robinson T.J."/>
        </authorList>
    </citation>
    <scope>NUCLEOTIDE SEQUENCE [GENOMIC DNA]</scope>
</reference>
<name>CYB_CONGN</name>